<feature type="chain" id="PRO_0000109224" description="UDP-N-acetylglucosamine--N-acetylmuramyl-(pentapeptide) pyrophosphoryl-undecaprenol N-acetylglucosamine transferase">
    <location>
        <begin position="1"/>
        <end position="352"/>
    </location>
</feature>
<feature type="binding site" evidence="1">
    <location>
        <position position="195"/>
    </location>
    <ligand>
        <name>UDP-N-acetyl-alpha-D-glucosamine</name>
        <dbReference type="ChEBI" id="CHEBI:57705"/>
    </ligand>
</feature>
<feature type="binding site" evidence="1">
    <location>
        <position position="287"/>
    </location>
    <ligand>
        <name>UDP-N-acetyl-alpha-D-glucosamine</name>
        <dbReference type="ChEBI" id="CHEBI:57705"/>
    </ligand>
</feature>
<organism>
    <name type="scientific">Streptococcus pneumoniae (strain ATCC BAA-255 / R6)</name>
    <dbReference type="NCBI Taxonomy" id="171101"/>
    <lineage>
        <taxon>Bacteria</taxon>
        <taxon>Bacillati</taxon>
        <taxon>Bacillota</taxon>
        <taxon>Bacilli</taxon>
        <taxon>Lactobacillales</taxon>
        <taxon>Streptococcaceae</taxon>
        <taxon>Streptococcus</taxon>
    </lineage>
</organism>
<evidence type="ECO:0000255" key="1">
    <source>
        <dbReference type="HAMAP-Rule" id="MF_00033"/>
    </source>
</evidence>
<keyword id="KW-0131">Cell cycle</keyword>
<keyword id="KW-0132">Cell division</keyword>
<keyword id="KW-1003">Cell membrane</keyword>
<keyword id="KW-0133">Cell shape</keyword>
<keyword id="KW-0961">Cell wall biogenesis/degradation</keyword>
<keyword id="KW-0328">Glycosyltransferase</keyword>
<keyword id="KW-0472">Membrane</keyword>
<keyword id="KW-0573">Peptidoglycan synthesis</keyword>
<keyword id="KW-1185">Reference proteome</keyword>
<keyword id="KW-0808">Transferase</keyword>
<comment type="function">
    <text evidence="1">Cell wall formation. Catalyzes the transfer of a GlcNAc subunit on undecaprenyl-pyrophosphoryl-MurNAc-pentapeptide (lipid intermediate I) to form undecaprenyl-pyrophosphoryl-MurNAc-(pentapeptide)GlcNAc (lipid intermediate II).</text>
</comment>
<comment type="catalytic activity">
    <reaction evidence="1">
        <text>Mur2Ac(oyl-L-Ala-gamma-D-Glu-L-Lys-D-Ala-D-Ala)-di-trans,octa-cis-undecaprenyl diphosphate + UDP-N-acetyl-alpha-D-glucosamine = beta-D-GlcNAc-(1-&gt;4)-Mur2Ac(oyl-L-Ala-gamma-D-Glu-L-Lys-D-Ala-D-Ala)-di-trans,octa-cis-undecaprenyl diphosphate + UDP + H(+)</text>
        <dbReference type="Rhea" id="RHEA:23192"/>
        <dbReference type="ChEBI" id="CHEBI:15378"/>
        <dbReference type="ChEBI" id="CHEBI:57705"/>
        <dbReference type="ChEBI" id="CHEBI:58223"/>
        <dbReference type="ChEBI" id="CHEBI:60032"/>
        <dbReference type="ChEBI" id="CHEBI:60033"/>
        <dbReference type="EC" id="2.4.1.227"/>
    </reaction>
</comment>
<comment type="pathway">
    <text evidence="1">Cell wall biogenesis; peptidoglycan biosynthesis.</text>
</comment>
<comment type="subcellular location">
    <subcellularLocation>
        <location evidence="1">Cell membrane</location>
        <topology evidence="1">Peripheral membrane protein</topology>
        <orientation evidence="1">Cytoplasmic side</orientation>
    </subcellularLocation>
</comment>
<comment type="similarity">
    <text evidence="1">Belongs to the glycosyltransferase 28 family. MurG subfamily.</text>
</comment>
<sequence length="352" mass="39448">MKKIVFTGGGTVGHVTLNLLLMPKFIEDGWEVHYIGDKRGIEHQEILKSGLDVTFHSIATGKLRRYFSWQNMLDVFKVGWGIVQSLFIMLRLRPQTLFSKGGFVSVPPVIAARVSGVPVFIHESDLSMGLANKIAYKFATKMYSTFEQASSLSKVEHVGAVTKVSDQKNPEPDELVDIQTHFNHKLPTVLFVGGSAGARVFNQLVTDHKKELTERYNIINLTGDSSLNELSQNLFRVDYVTDLYQPLMELADIVVTRGGANTIFELLAIAKLHVIVPLGREASRGDQIENAAYFVKKGYAEDLQESDLTLDSLEEKLSHLLSHKEDYQAKMKASKELKSLADFYQLLKKDLS</sequence>
<reference key="1">
    <citation type="journal article" date="2001" name="J. Bacteriol.">
        <title>Genome of the bacterium Streptococcus pneumoniae strain R6.</title>
        <authorList>
            <person name="Hoskins J."/>
            <person name="Alborn W.E. Jr."/>
            <person name="Arnold J."/>
            <person name="Blaszczak L.C."/>
            <person name="Burgett S."/>
            <person name="DeHoff B.S."/>
            <person name="Estrem S.T."/>
            <person name="Fritz L."/>
            <person name="Fu D.-J."/>
            <person name="Fuller W."/>
            <person name="Geringer C."/>
            <person name="Gilmour R."/>
            <person name="Glass J.S."/>
            <person name="Khoja H."/>
            <person name="Kraft A.R."/>
            <person name="Lagace R.E."/>
            <person name="LeBlanc D.J."/>
            <person name="Lee L.N."/>
            <person name="Lefkowitz E.J."/>
            <person name="Lu J."/>
            <person name="Matsushima P."/>
            <person name="McAhren S.M."/>
            <person name="McHenney M."/>
            <person name="McLeaster K."/>
            <person name="Mundy C.W."/>
            <person name="Nicas T.I."/>
            <person name="Norris F.H."/>
            <person name="O'Gara M."/>
            <person name="Peery R.B."/>
            <person name="Robertson G.T."/>
            <person name="Rockey P."/>
            <person name="Sun P.-M."/>
            <person name="Winkler M.E."/>
            <person name="Yang Y."/>
            <person name="Young-Bellido M."/>
            <person name="Zhao G."/>
            <person name="Zook C.A."/>
            <person name="Baltz R.H."/>
            <person name="Jaskunas S.R."/>
            <person name="Rosteck P.R. Jr."/>
            <person name="Skatrud P.L."/>
            <person name="Glass J.I."/>
        </authorList>
    </citation>
    <scope>NUCLEOTIDE SEQUENCE [LARGE SCALE GENOMIC DNA]</scope>
    <source>
        <strain>ATCC BAA-255 / R6</strain>
    </source>
</reference>
<dbReference type="EC" id="2.4.1.227" evidence="1"/>
<dbReference type="EMBL" id="AE007317">
    <property type="protein sequence ID" value="AAK99408.1"/>
    <property type="molecule type" value="Genomic_DNA"/>
</dbReference>
<dbReference type="PIR" id="D97947">
    <property type="entry name" value="D97947"/>
</dbReference>
<dbReference type="RefSeq" id="NP_358198.1">
    <property type="nucleotide sequence ID" value="NC_003098.1"/>
</dbReference>
<dbReference type="RefSeq" id="WP_000724838.1">
    <property type="nucleotide sequence ID" value="NC_003098.1"/>
</dbReference>
<dbReference type="SMR" id="Q8DQM1"/>
<dbReference type="STRING" id="171101.spr0604"/>
<dbReference type="CAZy" id="GT28">
    <property type="family name" value="Glycosyltransferase Family 28"/>
</dbReference>
<dbReference type="KEGG" id="spr:spr0604"/>
<dbReference type="PATRIC" id="fig|171101.6.peg.671"/>
<dbReference type="eggNOG" id="COG0707">
    <property type="taxonomic scope" value="Bacteria"/>
</dbReference>
<dbReference type="HOGENOM" id="CLU_037404_0_0_9"/>
<dbReference type="UniPathway" id="UPA00219"/>
<dbReference type="Proteomes" id="UP000000586">
    <property type="component" value="Chromosome"/>
</dbReference>
<dbReference type="GO" id="GO:0005886">
    <property type="term" value="C:plasma membrane"/>
    <property type="evidence" value="ECO:0007669"/>
    <property type="project" value="UniProtKB-SubCell"/>
</dbReference>
<dbReference type="GO" id="GO:0016757">
    <property type="term" value="F:glycosyltransferase activity"/>
    <property type="evidence" value="ECO:0000318"/>
    <property type="project" value="GO_Central"/>
</dbReference>
<dbReference type="GO" id="GO:0050511">
    <property type="term" value="F:undecaprenyldiphospho-muramoylpentapeptide beta-N-acetylglucosaminyltransferase activity"/>
    <property type="evidence" value="ECO:0007669"/>
    <property type="project" value="UniProtKB-UniRule"/>
</dbReference>
<dbReference type="GO" id="GO:0005975">
    <property type="term" value="P:carbohydrate metabolic process"/>
    <property type="evidence" value="ECO:0007669"/>
    <property type="project" value="InterPro"/>
</dbReference>
<dbReference type="GO" id="GO:0051301">
    <property type="term" value="P:cell division"/>
    <property type="evidence" value="ECO:0007669"/>
    <property type="project" value="UniProtKB-KW"/>
</dbReference>
<dbReference type="GO" id="GO:0071555">
    <property type="term" value="P:cell wall organization"/>
    <property type="evidence" value="ECO:0007669"/>
    <property type="project" value="UniProtKB-KW"/>
</dbReference>
<dbReference type="GO" id="GO:0030259">
    <property type="term" value="P:lipid glycosylation"/>
    <property type="evidence" value="ECO:0007669"/>
    <property type="project" value="UniProtKB-UniRule"/>
</dbReference>
<dbReference type="GO" id="GO:0009252">
    <property type="term" value="P:peptidoglycan biosynthetic process"/>
    <property type="evidence" value="ECO:0007669"/>
    <property type="project" value="UniProtKB-UniRule"/>
</dbReference>
<dbReference type="GO" id="GO:0008360">
    <property type="term" value="P:regulation of cell shape"/>
    <property type="evidence" value="ECO:0007669"/>
    <property type="project" value="UniProtKB-KW"/>
</dbReference>
<dbReference type="CDD" id="cd03785">
    <property type="entry name" value="GT28_MurG"/>
    <property type="match status" value="1"/>
</dbReference>
<dbReference type="Gene3D" id="3.40.50.2000">
    <property type="entry name" value="Glycogen Phosphorylase B"/>
    <property type="match status" value="2"/>
</dbReference>
<dbReference type="HAMAP" id="MF_00033">
    <property type="entry name" value="MurG"/>
    <property type="match status" value="1"/>
</dbReference>
<dbReference type="InterPro" id="IPR006009">
    <property type="entry name" value="GlcNAc_MurG"/>
</dbReference>
<dbReference type="InterPro" id="IPR007235">
    <property type="entry name" value="Glyco_trans_28_C"/>
</dbReference>
<dbReference type="InterPro" id="IPR004276">
    <property type="entry name" value="GlycoTrans_28_N"/>
</dbReference>
<dbReference type="PANTHER" id="PTHR21015:SF27">
    <property type="entry name" value="UDP-N-ACETYLGLUCOSAMINE--N-ACETYLMURAMYL-(PENTAPEPTIDE) PYROPHOSPHORYL-UNDECAPRENOL N-ACETYLGLUCOSAMINE TRANSFERASE"/>
    <property type="match status" value="1"/>
</dbReference>
<dbReference type="PANTHER" id="PTHR21015">
    <property type="entry name" value="UDP-N-ACETYLGLUCOSAMINE--N-ACETYLMURAMYL-(PENTAPEPTIDE) PYROPHOSPHORYL-UNDECAPRENOL N-ACETYLGLUCOSAMINE TRANSFERASE 1"/>
    <property type="match status" value="1"/>
</dbReference>
<dbReference type="Pfam" id="PF04101">
    <property type="entry name" value="Glyco_tran_28_C"/>
    <property type="match status" value="1"/>
</dbReference>
<dbReference type="Pfam" id="PF03033">
    <property type="entry name" value="Glyco_transf_28"/>
    <property type="match status" value="1"/>
</dbReference>
<dbReference type="SUPFAM" id="SSF53756">
    <property type="entry name" value="UDP-Glycosyltransferase/glycogen phosphorylase"/>
    <property type="match status" value="1"/>
</dbReference>
<name>MURG_STRR6</name>
<accession>Q8DQM1</accession>
<protein>
    <recommendedName>
        <fullName evidence="1">UDP-N-acetylglucosamine--N-acetylmuramyl-(pentapeptide) pyrophosphoryl-undecaprenol N-acetylglucosamine transferase</fullName>
        <ecNumber evidence="1">2.4.1.227</ecNumber>
    </recommendedName>
    <alternativeName>
        <fullName evidence="1">Undecaprenyl-PP-MurNAc-pentapeptide-UDPGlcNAc GlcNAc transferase</fullName>
    </alternativeName>
</protein>
<gene>
    <name evidence="1" type="primary">murG</name>
    <name type="ordered locus">spr0604</name>
</gene>
<proteinExistence type="inferred from homology"/>